<reference key="1">
    <citation type="journal article" date="2008" name="BMC Genomics">
        <title>Acidithiobacillus ferrooxidans metabolism: from genome sequence to industrial applications.</title>
        <authorList>
            <person name="Valdes J."/>
            <person name="Pedroso I."/>
            <person name="Quatrini R."/>
            <person name="Dodson R.J."/>
            <person name="Tettelin H."/>
            <person name="Blake R. II"/>
            <person name="Eisen J.A."/>
            <person name="Holmes D.S."/>
        </authorList>
    </citation>
    <scope>NUCLEOTIDE SEQUENCE [LARGE SCALE GENOMIC DNA]</scope>
    <source>
        <strain>ATCC 23270 / DSM 14882 / CIP 104768 / NCIMB 8455</strain>
    </source>
</reference>
<name>ERPA_ACIF2</name>
<comment type="function">
    <text evidence="1">Required for insertion of 4Fe-4S clusters for at least IspG.</text>
</comment>
<comment type="cofactor">
    <cofactor evidence="1">
        <name>iron-sulfur cluster</name>
        <dbReference type="ChEBI" id="CHEBI:30408"/>
    </cofactor>
    <text evidence="1">Binds 1 iron-sulfur cluster per subunit.</text>
</comment>
<comment type="subunit">
    <text evidence="1">Homodimer.</text>
</comment>
<comment type="similarity">
    <text evidence="1">Belongs to the HesB/IscA family.</text>
</comment>
<accession>B7JAH6</accession>
<protein>
    <recommendedName>
        <fullName evidence="1">Iron-sulfur cluster insertion protein ErpA</fullName>
    </recommendedName>
</protein>
<keyword id="KW-0408">Iron</keyword>
<keyword id="KW-0411">Iron-sulfur</keyword>
<keyword id="KW-0479">Metal-binding</keyword>
<keyword id="KW-1185">Reference proteome</keyword>
<organism>
    <name type="scientific">Acidithiobacillus ferrooxidans (strain ATCC 23270 / DSM 14882 / CIP 104768 / NCIMB 8455)</name>
    <name type="common">Ferrobacillus ferrooxidans (strain ATCC 23270)</name>
    <dbReference type="NCBI Taxonomy" id="243159"/>
    <lineage>
        <taxon>Bacteria</taxon>
        <taxon>Pseudomonadati</taxon>
        <taxon>Pseudomonadota</taxon>
        <taxon>Acidithiobacillia</taxon>
        <taxon>Acidithiobacillales</taxon>
        <taxon>Acidithiobacillaceae</taxon>
        <taxon>Acidithiobacillus</taxon>
    </lineage>
</organism>
<proteinExistence type="inferred from homology"/>
<evidence type="ECO:0000255" key="1">
    <source>
        <dbReference type="HAMAP-Rule" id="MF_01380"/>
    </source>
</evidence>
<gene>
    <name evidence="1" type="primary">erpA</name>
    <name type="ordered locus">AFE_3067</name>
</gene>
<dbReference type="EMBL" id="CP001219">
    <property type="protein sequence ID" value="ACK79307.1"/>
    <property type="molecule type" value="Genomic_DNA"/>
</dbReference>
<dbReference type="SMR" id="B7JAH6"/>
<dbReference type="STRING" id="243159.AFE_3067"/>
<dbReference type="PaxDb" id="243159-AFE_3067"/>
<dbReference type="KEGG" id="afr:AFE_3067"/>
<dbReference type="eggNOG" id="COG0316">
    <property type="taxonomic scope" value="Bacteria"/>
</dbReference>
<dbReference type="HOGENOM" id="CLU_069054_5_3_6"/>
<dbReference type="Proteomes" id="UP000001362">
    <property type="component" value="Chromosome"/>
</dbReference>
<dbReference type="GO" id="GO:0051537">
    <property type="term" value="F:2 iron, 2 sulfur cluster binding"/>
    <property type="evidence" value="ECO:0007669"/>
    <property type="project" value="TreeGrafter"/>
</dbReference>
<dbReference type="GO" id="GO:0051539">
    <property type="term" value="F:4 iron, 4 sulfur cluster binding"/>
    <property type="evidence" value="ECO:0007669"/>
    <property type="project" value="TreeGrafter"/>
</dbReference>
<dbReference type="GO" id="GO:0005506">
    <property type="term" value="F:iron ion binding"/>
    <property type="evidence" value="ECO:0007669"/>
    <property type="project" value="TreeGrafter"/>
</dbReference>
<dbReference type="GO" id="GO:0016226">
    <property type="term" value="P:iron-sulfur cluster assembly"/>
    <property type="evidence" value="ECO:0007669"/>
    <property type="project" value="InterPro"/>
</dbReference>
<dbReference type="FunFam" id="2.60.300.12:FF:000002">
    <property type="entry name" value="Iron-sulfur cluster insertion protein ErpA"/>
    <property type="match status" value="1"/>
</dbReference>
<dbReference type="Gene3D" id="2.60.300.12">
    <property type="entry name" value="HesB-like domain"/>
    <property type="match status" value="1"/>
</dbReference>
<dbReference type="HAMAP" id="MF_01380">
    <property type="entry name" value="Fe_S_insert_ErpA"/>
    <property type="match status" value="1"/>
</dbReference>
<dbReference type="InterPro" id="IPR000361">
    <property type="entry name" value="FeS_biogenesis"/>
</dbReference>
<dbReference type="InterPro" id="IPR016092">
    <property type="entry name" value="FeS_cluster_insertion"/>
</dbReference>
<dbReference type="InterPro" id="IPR017870">
    <property type="entry name" value="FeS_cluster_insertion_CS"/>
</dbReference>
<dbReference type="InterPro" id="IPR023063">
    <property type="entry name" value="FeS_cluster_insertion_RrpA"/>
</dbReference>
<dbReference type="InterPro" id="IPR035903">
    <property type="entry name" value="HesB-like_dom_sf"/>
</dbReference>
<dbReference type="NCBIfam" id="TIGR00049">
    <property type="entry name" value="iron-sulfur cluster assembly accessory protein"/>
    <property type="match status" value="1"/>
</dbReference>
<dbReference type="NCBIfam" id="NF010147">
    <property type="entry name" value="PRK13623.1"/>
    <property type="match status" value="1"/>
</dbReference>
<dbReference type="PANTHER" id="PTHR43011">
    <property type="entry name" value="IRON-SULFUR CLUSTER ASSEMBLY 2 HOMOLOG, MITOCHONDRIAL"/>
    <property type="match status" value="1"/>
</dbReference>
<dbReference type="PANTHER" id="PTHR43011:SF1">
    <property type="entry name" value="IRON-SULFUR CLUSTER ASSEMBLY 2 HOMOLOG, MITOCHONDRIAL"/>
    <property type="match status" value="1"/>
</dbReference>
<dbReference type="Pfam" id="PF01521">
    <property type="entry name" value="Fe-S_biosyn"/>
    <property type="match status" value="1"/>
</dbReference>
<dbReference type="SUPFAM" id="SSF89360">
    <property type="entry name" value="HesB-like domain"/>
    <property type="match status" value="1"/>
</dbReference>
<dbReference type="PROSITE" id="PS01152">
    <property type="entry name" value="HESB"/>
    <property type="match status" value="1"/>
</dbReference>
<sequence>MMSTATETMTDLDSIPPVMTLTQNAADKIASLIEEEGSDDLKLRVFVTGGGCSGFQYGFTFDENMNEGDTEVHQLGVSLLIDPMSYQYLVGAEIDYSEGLEGAQFVIKNPNATTTCGCGSSFSA</sequence>
<feature type="chain" id="PRO_1000144890" description="Iron-sulfur cluster insertion protein ErpA">
    <location>
        <begin position="1"/>
        <end position="124"/>
    </location>
</feature>
<feature type="binding site" evidence="1">
    <location>
        <position position="52"/>
    </location>
    <ligand>
        <name>iron-sulfur cluster</name>
        <dbReference type="ChEBI" id="CHEBI:30408"/>
    </ligand>
</feature>
<feature type="binding site" evidence="1">
    <location>
        <position position="116"/>
    </location>
    <ligand>
        <name>iron-sulfur cluster</name>
        <dbReference type="ChEBI" id="CHEBI:30408"/>
    </ligand>
</feature>
<feature type="binding site" evidence="1">
    <location>
        <position position="118"/>
    </location>
    <ligand>
        <name>iron-sulfur cluster</name>
        <dbReference type="ChEBI" id="CHEBI:30408"/>
    </ligand>
</feature>